<comment type="induction">
    <text>By abscisic acid (ABA) and salt stress.</text>
</comment>
<comment type="similarity">
    <text evidence="2">Belongs to the plant dehydrin family.</text>
</comment>
<proteinExistence type="evidence at transcript level"/>
<feature type="chain" id="PRO_0000100050" description="Abscisic acid and environmental stress-inducible protein TAS14">
    <location>
        <begin position="1"/>
        <end position="130"/>
    </location>
</feature>
<feature type="region of interest" description="Disordered" evidence="1">
    <location>
        <begin position="1"/>
        <end position="130"/>
    </location>
</feature>
<feature type="compositionally biased region" description="Gly residues" evidence="1">
    <location>
        <begin position="27"/>
        <end position="58"/>
    </location>
</feature>
<feature type="compositionally biased region" description="Basic and acidic residues" evidence="1">
    <location>
        <begin position="61"/>
        <end position="73"/>
    </location>
</feature>
<feature type="compositionally biased region" description="Basic and acidic residues" evidence="1">
    <location>
        <begin position="92"/>
        <end position="130"/>
    </location>
</feature>
<evidence type="ECO:0000256" key="1">
    <source>
        <dbReference type="SAM" id="MobiDB-lite"/>
    </source>
</evidence>
<evidence type="ECO:0000305" key="2"/>
<dbReference type="EMBL" id="X51904">
    <property type="protein sequence ID" value="CAA36184.1"/>
    <property type="molecule type" value="mRNA"/>
</dbReference>
<dbReference type="EMBL" id="U26423">
    <property type="protein sequence ID" value="AAC49618.1"/>
    <property type="molecule type" value="Genomic_DNA"/>
</dbReference>
<dbReference type="PIR" id="S12308">
    <property type="entry name" value="S12308"/>
</dbReference>
<dbReference type="RefSeq" id="NP_001234038.1">
    <property type="nucleotide sequence ID" value="NM_001247109.1"/>
</dbReference>
<dbReference type="STRING" id="4081.P22240"/>
<dbReference type="PaxDb" id="4081-Solyc02g084850.2.1"/>
<dbReference type="EnsemblPlants" id="Solyc02g084850.3.1">
    <property type="protein sequence ID" value="Solyc02g084850.3.1"/>
    <property type="gene ID" value="Solyc02g084850.3"/>
</dbReference>
<dbReference type="GeneID" id="544056"/>
<dbReference type="Gramene" id="Solyc02g084850.3.1">
    <property type="protein sequence ID" value="Solyc02g084850.3.1"/>
    <property type="gene ID" value="Solyc02g084850.3"/>
</dbReference>
<dbReference type="KEGG" id="sly:544056"/>
<dbReference type="eggNOG" id="ENOG502R7ZX">
    <property type="taxonomic scope" value="Eukaryota"/>
</dbReference>
<dbReference type="HOGENOM" id="CLU_060028_1_0_1"/>
<dbReference type="InParanoid" id="P22240"/>
<dbReference type="OMA" id="AQYGNQD"/>
<dbReference type="Proteomes" id="UP000004994">
    <property type="component" value="Chromosome 2"/>
</dbReference>
<dbReference type="GO" id="GO:0009631">
    <property type="term" value="P:cold acclimation"/>
    <property type="evidence" value="ECO:0000318"/>
    <property type="project" value="GO_Central"/>
</dbReference>
<dbReference type="GO" id="GO:0009737">
    <property type="term" value="P:response to abscisic acid"/>
    <property type="evidence" value="ECO:0000318"/>
    <property type="project" value="GO_Central"/>
</dbReference>
<dbReference type="GO" id="GO:0009414">
    <property type="term" value="P:response to water deprivation"/>
    <property type="evidence" value="ECO:0000318"/>
    <property type="project" value="GO_Central"/>
</dbReference>
<dbReference type="InterPro" id="IPR000167">
    <property type="entry name" value="Dehydrin"/>
</dbReference>
<dbReference type="InterPro" id="IPR030513">
    <property type="entry name" value="Dehydrin_CS"/>
</dbReference>
<dbReference type="PANTHER" id="PTHR33346:SF22">
    <property type="entry name" value="ABSCISIC ACID AND ENVIRONMENTAL STRESS-INDUCIBLE PROTEIN TAS14"/>
    <property type="match status" value="1"/>
</dbReference>
<dbReference type="PANTHER" id="PTHR33346">
    <property type="entry name" value="DEHYDRIN XERO 2-RELATED"/>
    <property type="match status" value="1"/>
</dbReference>
<dbReference type="Pfam" id="PF00257">
    <property type="entry name" value="Dehydrin"/>
    <property type="match status" value="1"/>
</dbReference>
<dbReference type="PROSITE" id="PS00315">
    <property type="entry name" value="DEHYDRIN_1"/>
    <property type="match status" value="1"/>
</dbReference>
<dbReference type="PROSITE" id="PS00823">
    <property type="entry name" value="DEHYDRIN_2"/>
    <property type="match status" value="1"/>
</dbReference>
<sequence length="130" mass="13948">MAQYGNQDQMRKTDEYGNHVQETGVYQGTGTGGMMGGTGTGGMMGGTGGEYGTQGMGTGTHHHEGQQQLRRSDSSSSSEDDGEGGRRKKGLKEKIMEKMPGQHEGEYGQTTGEEKKGMMDKIKDKIPGMH</sequence>
<reference key="1">
    <citation type="journal article" date="1990" name="Plant Mol. Biol.">
        <title>A tomato cDNA inducible by salt stress and abscisic acid: nucleotide sequence and expression pattern.</title>
        <authorList>
            <person name="Godoy J.A."/>
            <person name="Pardo J.M."/>
            <person name="Pintor-Toro J.A."/>
        </authorList>
    </citation>
    <scope>NUCLEOTIDE SEQUENCE [MRNA]</scope>
    <source>
        <strain>cv. Rutgers-Marglobe</strain>
        <tissue>Seedling</tissue>
    </source>
</reference>
<reference key="2">
    <citation type="journal article" date="1996" name="Plant Mol. Biol.">
        <title>Structure of the dehydrin tas14 gene of tomato and its developmental and environmental regulation in transgenic tobacco.</title>
        <authorList>
            <person name="Parra M.M."/>
            <person name="del Pozo O."/>
            <person name="Luna R."/>
            <person name="Godoy J.A."/>
            <person name="Pintor-Toro J.A."/>
        </authorList>
    </citation>
    <scope>NUCLEOTIDE SEQUENCE [GENOMIC DNA]</scope>
</reference>
<name>TAS14_SOLLC</name>
<keyword id="KW-1185">Reference proteome</keyword>
<keyword id="KW-0346">Stress response</keyword>
<gene>
    <name type="primary">TAS14</name>
</gene>
<accession>P22240</accession>
<organism>
    <name type="scientific">Solanum lycopersicum</name>
    <name type="common">Tomato</name>
    <name type="synonym">Lycopersicon esculentum</name>
    <dbReference type="NCBI Taxonomy" id="4081"/>
    <lineage>
        <taxon>Eukaryota</taxon>
        <taxon>Viridiplantae</taxon>
        <taxon>Streptophyta</taxon>
        <taxon>Embryophyta</taxon>
        <taxon>Tracheophyta</taxon>
        <taxon>Spermatophyta</taxon>
        <taxon>Magnoliopsida</taxon>
        <taxon>eudicotyledons</taxon>
        <taxon>Gunneridae</taxon>
        <taxon>Pentapetalae</taxon>
        <taxon>asterids</taxon>
        <taxon>lamiids</taxon>
        <taxon>Solanales</taxon>
        <taxon>Solanaceae</taxon>
        <taxon>Solanoideae</taxon>
        <taxon>Solaneae</taxon>
        <taxon>Solanum</taxon>
        <taxon>Solanum subgen. Lycopersicon</taxon>
    </lineage>
</organism>
<protein>
    <recommendedName>
        <fullName>Abscisic acid and environmental stress-inducible protein TAS14</fullName>
    </recommendedName>
    <alternativeName>
        <fullName>Dehydrin TAS14</fullName>
    </alternativeName>
</protein>